<organism>
    <name type="scientific">Mycobacterium tuberculosis (strain CDC 1551 / Oshkosh)</name>
    <dbReference type="NCBI Taxonomy" id="83331"/>
    <lineage>
        <taxon>Bacteria</taxon>
        <taxon>Bacillati</taxon>
        <taxon>Actinomycetota</taxon>
        <taxon>Actinomycetes</taxon>
        <taxon>Mycobacteriales</taxon>
        <taxon>Mycobacteriaceae</taxon>
        <taxon>Mycobacterium</taxon>
        <taxon>Mycobacterium tuberculosis complex</taxon>
    </lineage>
</organism>
<feature type="chain" id="PRO_0000427630" description="Uncharacterized protein MT0994">
    <location>
        <begin position="1"/>
        <end position="200"/>
    </location>
</feature>
<feature type="region of interest" description="Disordered" evidence="1">
    <location>
        <begin position="1"/>
        <end position="21"/>
    </location>
</feature>
<feature type="compositionally biased region" description="Basic and acidic residues" evidence="1">
    <location>
        <begin position="7"/>
        <end position="21"/>
    </location>
</feature>
<keyword id="KW-1185">Reference proteome</keyword>
<sequence>MSNSAQRDARNSRDESARASDTDRIQIAQLLAYAAEQGRLQLTDYEDRLARAYAATTYQELDRLRADLPGAAIGPRRGGECNPAPSTLLLALLGGFERRGRWNVPKKLTTFTLWGSGVLDLRYADFTSTEVDIRAYSIMGAQTILLPPEVNVEIHGHRVMGGFDRKVVGEGTRGAPTVRIRGFSLWGDVGIKRKPRKPRK</sequence>
<reference key="1">
    <citation type="journal article" date="2002" name="J. Bacteriol.">
        <title>Whole-genome comparison of Mycobacterium tuberculosis clinical and laboratory strains.</title>
        <authorList>
            <person name="Fleischmann R.D."/>
            <person name="Alland D."/>
            <person name="Eisen J.A."/>
            <person name="Carpenter L."/>
            <person name="White O."/>
            <person name="Peterson J.D."/>
            <person name="DeBoy R.T."/>
            <person name="Dodson R.J."/>
            <person name="Gwinn M.L."/>
            <person name="Haft D.H."/>
            <person name="Hickey E.K."/>
            <person name="Kolonay J.F."/>
            <person name="Nelson W.C."/>
            <person name="Umayam L.A."/>
            <person name="Ermolaeva M.D."/>
            <person name="Salzberg S.L."/>
            <person name="Delcher A."/>
            <person name="Utterback T.R."/>
            <person name="Weidman J.F."/>
            <person name="Khouri H.M."/>
            <person name="Gill J."/>
            <person name="Mikula A."/>
            <person name="Bishai W."/>
            <person name="Jacobs W.R. Jr."/>
            <person name="Venter J.C."/>
            <person name="Fraser C.M."/>
        </authorList>
    </citation>
    <scope>NUCLEOTIDE SEQUENCE [LARGE SCALE GENOMIC DNA]</scope>
    <source>
        <strain>CDC 1551 / Oshkosh</strain>
    </source>
</reference>
<protein>
    <recommendedName>
        <fullName>Uncharacterized protein MT0994</fullName>
    </recommendedName>
</protein>
<proteinExistence type="predicted"/>
<comment type="sequence caution" evidence="2">
    <conflict type="erroneous initiation">
        <sequence resource="EMBL-CDS" id="AAK45243"/>
    </conflict>
</comment>
<accession>P9WKM0</accession>
<accession>L0T5B3</accession>
<accession>P71544</accession>
<dbReference type="EMBL" id="AE000516">
    <property type="protein sequence ID" value="AAK45243.1"/>
    <property type="status" value="ALT_INIT"/>
    <property type="molecule type" value="Genomic_DNA"/>
</dbReference>
<dbReference type="PIR" id="D70718">
    <property type="entry name" value="D70718"/>
</dbReference>
<dbReference type="RefSeq" id="WP_003900243.1">
    <property type="nucleotide sequence ID" value="NZ_KK341227.1"/>
</dbReference>
<dbReference type="SMR" id="P9WKM0"/>
<dbReference type="KEGG" id="mtc:MT0994"/>
<dbReference type="PATRIC" id="fig|83331.31.peg.1066"/>
<dbReference type="HOGENOM" id="CLU_075817_0_1_11"/>
<dbReference type="Proteomes" id="UP000001020">
    <property type="component" value="Chromosome"/>
</dbReference>
<dbReference type="InterPro" id="IPR012551">
    <property type="entry name" value="DUF1707_SHOCT-like"/>
</dbReference>
<dbReference type="PANTHER" id="PTHR40763:SF4">
    <property type="entry name" value="DUF1707 DOMAIN-CONTAINING PROTEIN"/>
    <property type="match status" value="1"/>
</dbReference>
<dbReference type="PANTHER" id="PTHR40763">
    <property type="entry name" value="MEMBRANE PROTEIN-RELATED"/>
    <property type="match status" value="1"/>
</dbReference>
<dbReference type="Pfam" id="PF08044">
    <property type="entry name" value="DUF1707"/>
    <property type="match status" value="1"/>
</dbReference>
<evidence type="ECO:0000256" key="1">
    <source>
        <dbReference type="SAM" id="MobiDB-lite"/>
    </source>
</evidence>
<evidence type="ECO:0000305" key="2"/>
<gene>
    <name type="ordered locus">MT0994</name>
</gene>
<name>Y966_MYCTO</name>